<keyword id="KW-0496">Mitochondrion</keyword>
<keyword id="KW-1185">Reference proteome</keyword>
<keyword id="KW-0687">Ribonucleoprotein</keyword>
<keyword id="KW-0689">Ribosomal protein</keyword>
<keyword id="KW-0809">Transit peptide</keyword>
<gene>
    <name type="primary">MRPL4</name>
    <name type="ORF">Kpol_1001p15</name>
</gene>
<organism>
    <name type="scientific">Vanderwaltozyma polyspora (strain ATCC 22028 / DSM 70294 / BCRC 21397 / CBS 2163 / NBRC 10782 / NRRL Y-8283 / UCD 57-17)</name>
    <name type="common">Kluyveromyces polysporus</name>
    <dbReference type="NCBI Taxonomy" id="436907"/>
    <lineage>
        <taxon>Eukaryota</taxon>
        <taxon>Fungi</taxon>
        <taxon>Dikarya</taxon>
        <taxon>Ascomycota</taxon>
        <taxon>Saccharomycotina</taxon>
        <taxon>Saccharomycetes</taxon>
        <taxon>Saccharomycetales</taxon>
        <taxon>Saccharomycetaceae</taxon>
        <taxon>Vanderwaltozyma</taxon>
    </lineage>
</organism>
<proteinExistence type="inferred from homology"/>
<accession>A7TNQ2</accession>
<dbReference type="EMBL" id="DS480433">
    <property type="protein sequence ID" value="EDO16103.1"/>
    <property type="molecule type" value="Genomic_DNA"/>
</dbReference>
<dbReference type="RefSeq" id="XP_001643961.1">
    <property type="nucleotide sequence ID" value="XM_001643911.1"/>
</dbReference>
<dbReference type="SMR" id="A7TNQ2"/>
<dbReference type="FunCoup" id="A7TNQ2">
    <property type="interactions" value="273"/>
</dbReference>
<dbReference type="STRING" id="436907.A7TNQ2"/>
<dbReference type="GeneID" id="5544246"/>
<dbReference type="KEGG" id="vpo:Kpol_1001p15"/>
<dbReference type="eggNOG" id="KOG3331">
    <property type="taxonomic scope" value="Eukaryota"/>
</dbReference>
<dbReference type="HOGENOM" id="CLU_872105_0_0_1"/>
<dbReference type="InParanoid" id="A7TNQ2"/>
<dbReference type="OMA" id="IRTTMWR"/>
<dbReference type="OrthoDB" id="270763at2759"/>
<dbReference type="PhylomeDB" id="A7TNQ2"/>
<dbReference type="Proteomes" id="UP000000267">
    <property type="component" value="Unassembled WGS sequence"/>
</dbReference>
<dbReference type="GO" id="GO:0005762">
    <property type="term" value="C:mitochondrial large ribosomal subunit"/>
    <property type="evidence" value="ECO:0007669"/>
    <property type="project" value="EnsemblFungi"/>
</dbReference>
<dbReference type="GO" id="GO:0003735">
    <property type="term" value="F:structural constituent of ribosome"/>
    <property type="evidence" value="ECO:0007669"/>
    <property type="project" value="EnsemblFungi"/>
</dbReference>
<dbReference type="GO" id="GO:0032543">
    <property type="term" value="P:mitochondrial translation"/>
    <property type="evidence" value="ECO:0007669"/>
    <property type="project" value="EnsemblFungi"/>
</dbReference>
<dbReference type="Gene3D" id="6.10.140.1190">
    <property type="match status" value="1"/>
</dbReference>
<dbReference type="Gene3D" id="6.10.330.20">
    <property type="match status" value="1"/>
</dbReference>
<dbReference type="InterPro" id="IPR038340">
    <property type="entry name" value="MRP-L47_sf"/>
</dbReference>
<dbReference type="InterPro" id="IPR010729">
    <property type="entry name" value="Ribosomal_uL29_mit"/>
</dbReference>
<dbReference type="PANTHER" id="PTHR21183:SF18">
    <property type="entry name" value="LARGE RIBOSOMAL SUBUNIT PROTEIN UL29M"/>
    <property type="match status" value="1"/>
</dbReference>
<dbReference type="PANTHER" id="PTHR21183">
    <property type="entry name" value="RIBOSOMAL PROTEIN L47, MITOCHONDRIAL-RELATED"/>
    <property type="match status" value="1"/>
</dbReference>
<dbReference type="Pfam" id="PF06984">
    <property type="entry name" value="MRP-L47"/>
    <property type="match status" value="1"/>
</dbReference>
<feature type="transit peptide" description="Mitochondrion" evidence="2">
    <location>
        <begin position="1"/>
        <end status="unknown"/>
    </location>
</feature>
<feature type="chain" id="PRO_0000372413" description="Large ribosomal subunit protein uL29m">
    <location>
        <begin status="unknown"/>
        <end position="322"/>
    </location>
</feature>
<feature type="region of interest" description="Disordered" evidence="3">
    <location>
        <begin position="1"/>
        <end position="44"/>
    </location>
</feature>
<comment type="subunit">
    <text evidence="1">Component of the mitochondrial large ribosomal subunit. Mature mitochondrial ribosomes consist of a small (37S) and a large (54S) subunit. The 37S subunit contains at least 33 different proteins and 1 molecule of RNA (15S). The 54S subunit contains at least 45 different proteins and 1 molecule of RNA (21S) (By similarity).</text>
</comment>
<comment type="subcellular location">
    <subcellularLocation>
        <location evidence="1">Mitochondrion</location>
    </subcellularLocation>
</comment>
<comment type="similarity">
    <text evidence="4">Belongs to the universal ribosomal protein uL29 family.</text>
</comment>
<protein>
    <recommendedName>
        <fullName evidence="4">Large ribosomal subunit protein uL29m</fullName>
    </recommendedName>
    <alternativeName>
        <fullName>54S ribosomal protein L4, mitochondrial</fullName>
    </alternativeName>
</protein>
<reference key="1">
    <citation type="journal article" date="2007" name="Proc. Natl. Acad. Sci. U.S.A.">
        <title>Independent sorting-out of thousands of duplicated gene pairs in two yeast species descended from a whole-genome duplication.</title>
        <authorList>
            <person name="Scannell D.R."/>
            <person name="Frank A.C."/>
            <person name="Conant G.C."/>
            <person name="Byrne K.P."/>
            <person name="Woolfit M."/>
            <person name="Wolfe K.H."/>
        </authorList>
    </citation>
    <scope>NUCLEOTIDE SEQUENCE [LARGE SCALE GENOMIC DNA]</scope>
    <source>
        <strain>ATCC 22028 / DSM 70294 / BCRC 21397 / CBS 2163 / NBRC 10782 / NRRL Y-8283 / UCD 57-17</strain>
    </source>
</reference>
<name>RM04_VANPO</name>
<evidence type="ECO:0000250" key="1"/>
<evidence type="ECO:0000255" key="2"/>
<evidence type="ECO:0000256" key="3">
    <source>
        <dbReference type="SAM" id="MobiDB-lite"/>
    </source>
</evidence>
<evidence type="ECO:0000305" key="4"/>
<sequence length="322" mass="37461">MLNVQRGLHTTVRLSARTKYTKPKPKPQARVIKSEPSQVTHHDNNLKIRAPIPPSAKNIVCPEDHPLWQFFADKKFLRDRADLDNHSRPWTIPELRRKSFEDLHSLWYTSLKERNILARENHLLKTAVESSDDSFEKVADKVRTTMWRIRHVLSERDWSYRIANEAFVEEVDSFVQEFEKDFLLLSQDEDEEAFEQLSRFQKSIFGISEFIDENVVNKRFIDGMKLIANLKVKKFSERNNDIKTFLDQTPNNKITDAGEAFLVFTCENTEKDVKEACEAVLELRNNGNAVSRYDELDTVAEYVNRLAQAQSQATQPVSEQSS</sequence>